<accession>A3NEI1</accession>
<protein>
    <recommendedName>
        <fullName evidence="2">Elongation factor Tu</fullName>
        <shortName evidence="2">EF-Tu</shortName>
        <ecNumber evidence="2">3.6.5.3</ecNumber>
    </recommendedName>
</protein>
<name>EFTU_BURP6</name>
<sequence length="396" mass="42991">MAKEKFERTKPHVNVGTIGHVDHGKTTLTAAIATVLSAKFGGEAKKYDEIDAAPEEKARGITINTAHIEYETANRHYAHVDCPGHADYVKNMITGAAQMDGAILVCSAADGPMPQTREHILLARQVGVPYIIVFLNKCDMVDDAELLELVEMEVRELLSKYDFPGDDTPIIKGSAKLALEGDKGELGEVAIMNLADALDTYIPTPERAVDGAFLMPVEDVFSISGRGTVVTGRVERGVIKVGEEIEIVGIKATAKTTCTGVEMFRKLLDQGQAGDNVGILLRGTKREDVERGQVLAKPGSITPHTHFTAEVYVLSKDEGGRHTPFFNNYRPQFYFRTTDVTGSIELPKDKEMVMPGDNVSITVKLIAPIAMEEGLRFAIREGGRTVGAGVVAKIIE</sequence>
<comment type="function">
    <text evidence="2">GTP hydrolase that promotes the GTP-dependent binding of aminoacyl-tRNA to the A-site of ribosomes during protein biosynthesis.</text>
</comment>
<comment type="catalytic activity">
    <reaction evidence="2">
        <text>GTP + H2O = GDP + phosphate + H(+)</text>
        <dbReference type="Rhea" id="RHEA:19669"/>
        <dbReference type="ChEBI" id="CHEBI:15377"/>
        <dbReference type="ChEBI" id="CHEBI:15378"/>
        <dbReference type="ChEBI" id="CHEBI:37565"/>
        <dbReference type="ChEBI" id="CHEBI:43474"/>
        <dbReference type="ChEBI" id="CHEBI:58189"/>
        <dbReference type="EC" id="3.6.5.3"/>
    </reaction>
    <physiologicalReaction direction="left-to-right" evidence="2">
        <dbReference type="Rhea" id="RHEA:19670"/>
    </physiologicalReaction>
</comment>
<comment type="subunit">
    <text evidence="2">Monomer.</text>
</comment>
<comment type="subcellular location">
    <subcellularLocation>
        <location evidence="2">Cytoplasm</location>
    </subcellularLocation>
</comment>
<comment type="similarity">
    <text evidence="2">Belongs to the TRAFAC class translation factor GTPase superfamily. Classic translation factor GTPase family. EF-Tu/EF-1A subfamily.</text>
</comment>
<feature type="chain" id="PRO_0000337344" description="Elongation factor Tu">
    <location>
        <begin position="1"/>
        <end position="396"/>
    </location>
</feature>
<feature type="domain" description="tr-type G">
    <location>
        <begin position="10"/>
        <end position="206"/>
    </location>
</feature>
<feature type="region of interest" description="G1" evidence="1">
    <location>
        <begin position="19"/>
        <end position="26"/>
    </location>
</feature>
<feature type="region of interest" description="G2" evidence="1">
    <location>
        <begin position="60"/>
        <end position="64"/>
    </location>
</feature>
<feature type="region of interest" description="G3" evidence="1">
    <location>
        <begin position="81"/>
        <end position="84"/>
    </location>
</feature>
<feature type="region of interest" description="G4" evidence="1">
    <location>
        <begin position="136"/>
        <end position="139"/>
    </location>
</feature>
<feature type="region of interest" description="G5" evidence="1">
    <location>
        <begin position="174"/>
        <end position="176"/>
    </location>
</feature>
<feature type="binding site" evidence="2">
    <location>
        <begin position="19"/>
        <end position="26"/>
    </location>
    <ligand>
        <name>GTP</name>
        <dbReference type="ChEBI" id="CHEBI:37565"/>
    </ligand>
</feature>
<feature type="binding site" evidence="2">
    <location>
        <position position="26"/>
    </location>
    <ligand>
        <name>Mg(2+)</name>
        <dbReference type="ChEBI" id="CHEBI:18420"/>
    </ligand>
</feature>
<feature type="binding site" evidence="2">
    <location>
        <begin position="81"/>
        <end position="85"/>
    </location>
    <ligand>
        <name>GTP</name>
        <dbReference type="ChEBI" id="CHEBI:37565"/>
    </ligand>
</feature>
<feature type="binding site" evidence="2">
    <location>
        <begin position="136"/>
        <end position="139"/>
    </location>
    <ligand>
        <name>GTP</name>
        <dbReference type="ChEBI" id="CHEBI:37565"/>
    </ligand>
</feature>
<evidence type="ECO:0000250" key="1"/>
<evidence type="ECO:0000255" key="2">
    <source>
        <dbReference type="HAMAP-Rule" id="MF_00118"/>
    </source>
</evidence>
<reference key="1">
    <citation type="journal article" date="2010" name="Genome Biol. Evol.">
        <title>Continuing evolution of Burkholderia mallei through genome reduction and large-scale rearrangements.</title>
        <authorList>
            <person name="Losada L."/>
            <person name="Ronning C.M."/>
            <person name="DeShazer D."/>
            <person name="Woods D."/>
            <person name="Fedorova N."/>
            <person name="Kim H.S."/>
            <person name="Shabalina S.A."/>
            <person name="Pearson T.R."/>
            <person name="Brinkac L."/>
            <person name="Tan P."/>
            <person name="Nandi T."/>
            <person name="Crabtree J."/>
            <person name="Badger J."/>
            <person name="Beckstrom-Sternberg S."/>
            <person name="Saqib M."/>
            <person name="Schutzer S.E."/>
            <person name="Keim P."/>
            <person name="Nierman W.C."/>
        </authorList>
    </citation>
    <scope>NUCLEOTIDE SEQUENCE [LARGE SCALE GENOMIC DNA]</scope>
    <source>
        <strain>668</strain>
    </source>
</reference>
<organism>
    <name type="scientific">Burkholderia pseudomallei (strain 668)</name>
    <dbReference type="NCBI Taxonomy" id="320373"/>
    <lineage>
        <taxon>Bacteria</taxon>
        <taxon>Pseudomonadati</taxon>
        <taxon>Pseudomonadota</taxon>
        <taxon>Betaproteobacteria</taxon>
        <taxon>Burkholderiales</taxon>
        <taxon>Burkholderiaceae</taxon>
        <taxon>Burkholderia</taxon>
        <taxon>pseudomallei group</taxon>
    </lineage>
</organism>
<dbReference type="EC" id="3.6.5.3" evidence="2"/>
<dbReference type="EMBL" id="CP000570">
    <property type="protein sequence ID" value="ABN82274.1"/>
    <property type="molecule type" value="Genomic_DNA"/>
</dbReference>
<dbReference type="EMBL" id="CP000570">
    <property type="protein sequence ID" value="ABN83650.1"/>
    <property type="molecule type" value="Genomic_DNA"/>
</dbReference>
<dbReference type="SMR" id="A3NEI1"/>
<dbReference type="KEGG" id="bpd:BURPS668_3748"/>
<dbReference type="KEGG" id="bpd:BURPS668_3762"/>
<dbReference type="HOGENOM" id="CLU_007265_0_0_4"/>
<dbReference type="GO" id="GO:0005737">
    <property type="term" value="C:cytoplasm"/>
    <property type="evidence" value="ECO:0007669"/>
    <property type="project" value="UniProtKB-SubCell"/>
</dbReference>
<dbReference type="GO" id="GO:0005525">
    <property type="term" value="F:GTP binding"/>
    <property type="evidence" value="ECO:0007669"/>
    <property type="project" value="UniProtKB-UniRule"/>
</dbReference>
<dbReference type="GO" id="GO:0003924">
    <property type="term" value="F:GTPase activity"/>
    <property type="evidence" value="ECO:0007669"/>
    <property type="project" value="InterPro"/>
</dbReference>
<dbReference type="GO" id="GO:0097216">
    <property type="term" value="F:guanosine tetraphosphate binding"/>
    <property type="evidence" value="ECO:0007669"/>
    <property type="project" value="UniProtKB-ARBA"/>
</dbReference>
<dbReference type="GO" id="GO:0003746">
    <property type="term" value="F:translation elongation factor activity"/>
    <property type="evidence" value="ECO:0007669"/>
    <property type="project" value="UniProtKB-UniRule"/>
</dbReference>
<dbReference type="CDD" id="cd01884">
    <property type="entry name" value="EF_Tu"/>
    <property type="match status" value="1"/>
</dbReference>
<dbReference type="CDD" id="cd03697">
    <property type="entry name" value="EFTU_II"/>
    <property type="match status" value="1"/>
</dbReference>
<dbReference type="CDD" id="cd03707">
    <property type="entry name" value="EFTU_III"/>
    <property type="match status" value="1"/>
</dbReference>
<dbReference type="FunFam" id="2.40.30.10:FF:000001">
    <property type="entry name" value="Elongation factor Tu"/>
    <property type="match status" value="1"/>
</dbReference>
<dbReference type="FunFam" id="3.40.50.300:FF:000003">
    <property type="entry name" value="Elongation factor Tu"/>
    <property type="match status" value="1"/>
</dbReference>
<dbReference type="Gene3D" id="3.40.50.300">
    <property type="entry name" value="P-loop containing nucleotide triphosphate hydrolases"/>
    <property type="match status" value="1"/>
</dbReference>
<dbReference type="Gene3D" id="2.40.30.10">
    <property type="entry name" value="Translation factors"/>
    <property type="match status" value="2"/>
</dbReference>
<dbReference type="HAMAP" id="MF_00118_B">
    <property type="entry name" value="EF_Tu_B"/>
    <property type="match status" value="1"/>
</dbReference>
<dbReference type="InterPro" id="IPR041709">
    <property type="entry name" value="EF-Tu_GTP-bd"/>
</dbReference>
<dbReference type="InterPro" id="IPR050055">
    <property type="entry name" value="EF-Tu_GTPase"/>
</dbReference>
<dbReference type="InterPro" id="IPR004161">
    <property type="entry name" value="EFTu-like_2"/>
</dbReference>
<dbReference type="InterPro" id="IPR033720">
    <property type="entry name" value="EFTU_2"/>
</dbReference>
<dbReference type="InterPro" id="IPR031157">
    <property type="entry name" value="G_TR_CS"/>
</dbReference>
<dbReference type="InterPro" id="IPR027417">
    <property type="entry name" value="P-loop_NTPase"/>
</dbReference>
<dbReference type="InterPro" id="IPR005225">
    <property type="entry name" value="Small_GTP-bd"/>
</dbReference>
<dbReference type="InterPro" id="IPR000795">
    <property type="entry name" value="T_Tr_GTP-bd_dom"/>
</dbReference>
<dbReference type="InterPro" id="IPR009000">
    <property type="entry name" value="Transl_B-barrel_sf"/>
</dbReference>
<dbReference type="InterPro" id="IPR009001">
    <property type="entry name" value="Transl_elong_EF1A/Init_IF2_C"/>
</dbReference>
<dbReference type="InterPro" id="IPR004541">
    <property type="entry name" value="Transl_elong_EFTu/EF1A_bac/org"/>
</dbReference>
<dbReference type="InterPro" id="IPR004160">
    <property type="entry name" value="Transl_elong_EFTu/EF1A_C"/>
</dbReference>
<dbReference type="NCBIfam" id="TIGR00485">
    <property type="entry name" value="EF-Tu"/>
    <property type="match status" value="1"/>
</dbReference>
<dbReference type="NCBIfam" id="NF000766">
    <property type="entry name" value="PRK00049.1"/>
    <property type="match status" value="1"/>
</dbReference>
<dbReference type="NCBIfam" id="NF009372">
    <property type="entry name" value="PRK12735.1"/>
    <property type="match status" value="1"/>
</dbReference>
<dbReference type="NCBIfam" id="NF009373">
    <property type="entry name" value="PRK12736.1"/>
    <property type="match status" value="1"/>
</dbReference>
<dbReference type="NCBIfam" id="TIGR00231">
    <property type="entry name" value="small_GTP"/>
    <property type="match status" value="1"/>
</dbReference>
<dbReference type="PANTHER" id="PTHR43721:SF22">
    <property type="entry name" value="ELONGATION FACTOR TU, MITOCHONDRIAL"/>
    <property type="match status" value="1"/>
</dbReference>
<dbReference type="PANTHER" id="PTHR43721">
    <property type="entry name" value="ELONGATION FACTOR TU-RELATED"/>
    <property type="match status" value="1"/>
</dbReference>
<dbReference type="Pfam" id="PF00009">
    <property type="entry name" value="GTP_EFTU"/>
    <property type="match status" value="1"/>
</dbReference>
<dbReference type="Pfam" id="PF03144">
    <property type="entry name" value="GTP_EFTU_D2"/>
    <property type="match status" value="1"/>
</dbReference>
<dbReference type="Pfam" id="PF03143">
    <property type="entry name" value="GTP_EFTU_D3"/>
    <property type="match status" value="1"/>
</dbReference>
<dbReference type="PRINTS" id="PR00315">
    <property type="entry name" value="ELONGATNFCT"/>
</dbReference>
<dbReference type="SUPFAM" id="SSF50465">
    <property type="entry name" value="EF-Tu/eEF-1alpha/eIF2-gamma C-terminal domain"/>
    <property type="match status" value="1"/>
</dbReference>
<dbReference type="SUPFAM" id="SSF52540">
    <property type="entry name" value="P-loop containing nucleoside triphosphate hydrolases"/>
    <property type="match status" value="1"/>
</dbReference>
<dbReference type="SUPFAM" id="SSF50447">
    <property type="entry name" value="Translation proteins"/>
    <property type="match status" value="1"/>
</dbReference>
<dbReference type="PROSITE" id="PS00301">
    <property type="entry name" value="G_TR_1"/>
    <property type="match status" value="1"/>
</dbReference>
<dbReference type="PROSITE" id="PS51722">
    <property type="entry name" value="G_TR_2"/>
    <property type="match status" value="1"/>
</dbReference>
<proteinExistence type="inferred from homology"/>
<keyword id="KW-0963">Cytoplasm</keyword>
<keyword id="KW-0251">Elongation factor</keyword>
<keyword id="KW-0342">GTP-binding</keyword>
<keyword id="KW-0378">Hydrolase</keyword>
<keyword id="KW-0460">Magnesium</keyword>
<keyword id="KW-0479">Metal-binding</keyword>
<keyword id="KW-0547">Nucleotide-binding</keyword>
<keyword id="KW-0648">Protein biosynthesis</keyword>
<gene>
    <name evidence="2" type="primary">tuf1</name>
    <name type="ordered locus">BURPS668_3748</name>
</gene>
<gene>
    <name evidence="2" type="primary">tuf2</name>
    <name type="ordered locus">BURPS668_3762</name>
</gene>